<accession>P28643</accession>
<comment type="catalytic activity">
    <reaction>
        <text>a (3R)-hydroxyacyl-[ACP] + NADP(+) = a 3-oxoacyl-[ACP] + NADPH + H(+)</text>
        <dbReference type="Rhea" id="RHEA:17397"/>
        <dbReference type="Rhea" id="RHEA-COMP:9916"/>
        <dbReference type="Rhea" id="RHEA-COMP:9945"/>
        <dbReference type="ChEBI" id="CHEBI:15378"/>
        <dbReference type="ChEBI" id="CHEBI:57783"/>
        <dbReference type="ChEBI" id="CHEBI:58349"/>
        <dbReference type="ChEBI" id="CHEBI:78776"/>
        <dbReference type="ChEBI" id="CHEBI:78827"/>
        <dbReference type="EC" id="1.1.1.100"/>
    </reaction>
</comment>
<comment type="pathway">
    <text>Lipid metabolism; fatty acid biosynthesis.</text>
</comment>
<comment type="subunit">
    <text evidence="3">Homotetramer.</text>
</comment>
<comment type="subcellular location">
    <subcellularLocation>
        <location>Plastid</location>
        <location>Chloroplast</location>
    </subcellularLocation>
    <subcellularLocation>
        <location>Plastid</location>
    </subcellularLocation>
    <text>And non-photosynthetic plastids.</text>
</comment>
<comment type="similarity">
    <text evidence="3">Belongs to the short-chain dehydrogenases/reductases (SDR) family.</text>
</comment>
<feature type="transit peptide" description="Chloroplast" evidence="1">
    <location>
        <begin position="1"/>
        <end position="61"/>
    </location>
</feature>
<feature type="chain" id="PRO_0000031981" description="3-oxoacyl-[acyl-carrier-protein] reductase, chloroplastic">
    <location>
        <begin position="62"/>
        <end position="320"/>
    </location>
</feature>
<feature type="active site" description="Proton acceptor" evidence="2">
    <location>
        <position position="227"/>
    </location>
</feature>
<feature type="binding site" evidence="1">
    <location>
        <begin position="82"/>
        <end position="106"/>
    </location>
    <ligand>
        <name>NADP(+)</name>
        <dbReference type="ChEBI" id="CHEBI:58349"/>
    </ligand>
</feature>
<feature type="binding site" evidence="1">
    <location>
        <position position="214"/>
    </location>
    <ligand>
        <name>substrate</name>
    </ligand>
</feature>
<name>FABG_CUPLA</name>
<organism>
    <name type="scientific">Cuphea lanceolata</name>
    <name type="common">Cigar flower</name>
    <dbReference type="NCBI Taxonomy" id="3930"/>
    <lineage>
        <taxon>Eukaryota</taxon>
        <taxon>Viridiplantae</taxon>
        <taxon>Streptophyta</taxon>
        <taxon>Embryophyta</taxon>
        <taxon>Tracheophyta</taxon>
        <taxon>Spermatophyta</taxon>
        <taxon>Magnoliopsida</taxon>
        <taxon>eudicotyledons</taxon>
        <taxon>Gunneridae</taxon>
        <taxon>Pentapetalae</taxon>
        <taxon>rosids</taxon>
        <taxon>malvids</taxon>
        <taxon>Myrtales</taxon>
        <taxon>Lythraceae</taxon>
        <taxon>Cuphea</taxon>
    </lineage>
</organism>
<protein>
    <recommendedName>
        <fullName>3-oxoacyl-[acyl-carrier-protein] reductase, chloroplastic</fullName>
        <ecNumber>1.1.1.100</ecNumber>
    </recommendedName>
    <alternativeName>
        <fullName>3-ketoacyl-acyl carrier protein reductase</fullName>
    </alternativeName>
</protein>
<gene>
    <name type="primary">CLKR27</name>
</gene>
<evidence type="ECO:0000250" key="1"/>
<evidence type="ECO:0000255" key="2">
    <source>
        <dbReference type="PROSITE-ProRule" id="PRU10001"/>
    </source>
</evidence>
<evidence type="ECO:0000305" key="3"/>
<sequence length="320" mass="33103">MATATAAGCSGAVALKSLGGRRLCIPQQLSPVLAGFGSHAAKSFPILSTRSIATSGIRAQVATAEKVSAGAGQSVESPVVIVTGASRGIGKAIALSLGKAGCKVLVNYARSSKEAEEVSKEIEAFGGQALTFGGDVSKEEDVEAMIKTAVDAWGTVDILVNNAGITRDGLLMRMKKSQWQEVIDLNLTGVFLCTQAAAKIMMKKKKGRIINIASVVGLVGNAGQANYSAAKAGVIGFTKTVAREYASRNINVNAVAPGFISSDMTSKLGDDINKKILETIPLGRYGQPEEVAGLVEFLAINPASSYVTGQVFTIDGGMTM</sequence>
<dbReference type="EC" id="1.1.1.100"/>
<dbReference type="EMBL" id="X64566">
    <property type="protein sequence ID" value="CAA45866.1"/>
    <property type="molecule type" value="mRNA"/>
</dbReference>
<dbReference type="PIR" id="S22450">
    <property type="entry name" value="S22450"/>
</dbReference>
<dbReference type="SMR" id="P28643"/>
<dbReference type="UniPathway" id="UPA00094"/>
<dbReference type="GO" id="GO:0009507">
    <property type="term" value="C:chloroplast"/>
    <property type="evidence" value="ECO:0007669"/>
    <property type="project" value="UniProtKB-SubCell"/>
</dbReference>
<dbReference type="GO" id="GO:0004316">
    <property type="term" value="F:3-oxoacyl-[acyl-carrier-protein] reductase (NADPH) activity"/>
    <property type="evidence" value="ECO:0007669"/>
    <property type="project" value="UniProtKB-EC"/>
</dbReference>
<dbReference type="GO" id="GO:0051287">
    <property type="term" value="F:NAD binding"/>
    <property type="evidence" value="ECO:0007669"/>
    <property type="project" value="InterPro"/>
</dbReference>
<dbReference type="GO" id="GO:0006633">
    <property type="term" value="P:fatty acid biosynthetic process"/>
    <property type="evidence" value="ECO:0007669"/>
    <property type="project" value="UniProtKB-UniPathway"/>
</dbReference>
<dbReference type="CDD" id="cd05333">
    <property type="entry name" value="BKR_SDR_c"/>
    <property type="match status" value="1"/>
</dbReference>
<dbReference type="FunFam" id="3.40.50.720:FF:000194">
    <property type="entry name" value="3-oxoacyl-[acyl-carrier-protein] reductase, chloroplastic"/>
    <property type="match status" value="1"/>
</dbReference>
<dbReference type="Gene3D" id="3.40.50.720">
    <property type="entry name" value="NAD(P)-binding Rossmann-like Domain"/>
    <property type="match status" value="1"/>
</dbReference>
<dbReference type="InterPro" id="IPR011284">
    <property type="entry name" value="3oxo_ACP_reduc"/>
</dbReference>
<dbReference type="InterPro" id="IPR036291">
    <property type="entry name" value="NAD(P)-bd_dom_sf"/>
</dbReference>
<dbReference type="InterPro" id="IPR020904">
    <property type="entry name" value="Sc_DH/Rdtase_CS"/>
</dbReference>
<dbReference type="InterPro" id="IPR050259">
    <property type="entry name" value="SDR"/>
</dbReference>
<dbReference type="InterPro" id="IPR002347">
    <property type="entry name" value="SDR_fam"/>
</dbReference>
<dbReference type="NCBIfam" id="TIGR01830">
    <property type="entry name" value="3oxo_ACP_reduc"/>
    <property type="match status" value="1"/>
</dbReference>
<dbReference type="NCBIfam" id="NF005559">
    <property type="entry name" value="PRK07231.1"/>
    <property type="match status" value="1"/>
</dbReference>
<dbReference type="NCBIfam" id="NF009466">
    <property type="entry name" value="PRK12826.1-2"/>
    <property type="match status" value="1"/>
</dbReference>
<dbReference type="PANTHER" id="PTHR42879">
    <property type="entry name" value="3-OXOACYL-(ACYL-CARRIER-PROTEIN) REDUCTASE"/>
    <property type="match status" value="1"/>
</dbReference>
<dbReference type="PANTHER" id="PTHR42879:SF2">
    <property type="entry name" value="3-OXOACYL-[ACYL-CARRIER-PROTEIN] REDUCTASE FABG"/>
    <property type="match status" value="1"/>
</dbReference>
<dbReference type="Pfam" id="PF13561">
    <property type="entry name" value="adh_short_C2"/>
    <property type="match status" value="1"/>
</dbReference>
<dbReference type="PRINTS" id="PR00081">
    <property type="entry name" value="GDHRDH"/>
</dbReference>
<dbReference type="PRINTS" id="PR00080">
    <property type="entry name" value="SDRFAMILY"/>
</dbReference>
<dbReference type="SMART" id="SM00822">
    <property type="entry name" value="PKS_KR"/>
    <property type="match status" value="1"/>
</dbReference>
<dbReference type="SUPFAM" id="SSF51735">
    <property type="entry name" value="NAD(P)-binding Rossmann-fold domains"/>
    <property type="match status" value="1"/>
</dbReference>
<dbReference type="PROSITE" id="PS00061">
    <property type="entry name" value="ADH_SHORT"/>
    <property type="match status" value="1"/>
</dbReference>
<proteinExistence type="evidence at transcript level"/>
<keyword id="KW-0150">Chloroplast</keyword>
<keyword id="KW-0275">Fatty acid biosynthesis</keyword>
<keyword id="KW-0276">Fatty acid metabolism</keyword>
<keyword id="KW-0444">Lipid biosynthesis</keyword>
<keyword id="KW-0443">Lipid metabolism</keyword>
<keyword id="KW-0521">NADP</keyword>
<keyword id="KW-0560">Oxidoreductase</keyword>
<keyword id="KW-0934">Plastid</keyword>
<keyword id="KW-0809">Transit peptide</keyword>
<reference key="1">
    <citation type="journal article" date="1992" name="Mol. Gen. Genet.">
        <title>Isolation and characterization of a cDNA from Cuphea lanceolata encoding a beta-ketoacyl-ACP reductase.</title>
        <authorList>
            <person name="Klein B."/>
            <person name="Pawlowski K."/>
            <person name="Hoericke-Grandpierre C."/>
            <person name="Schell J."/>
            <person name="Toepfer R."/>
        </authorList>
    </citation>
    <scope>NUCLEOTIDE SEQUENCE [MRNA]</scope>
</reference>